<name>CLPS_PSE14</name>
<sequence length="120" mass="13558">MHAFSKIRLTFNQDSPQSHEDDAAGIAVQDAKPTLQAPPMYKVVLFNDDYTPMDFVVEVLEVFFNLNRELATKVMLAVHTEGRAVCGLFTRDIAETKAMQVNQYARESQHPLLCEIEKDG</sequence>
<accession>Q48H65</accession>
<reference key="1">
    <citation type="journal article" date="2005" name="J. Bacteriol.">
        <title>Whole-genome sequence analysis of Pseudomonas syringae pv. phaseolicola 1448A reveals divergence among pathovars in genes involved in virulence and transposition.</title>
        <authorList>
            <person name="Joardar V."/>
            <person name="Lindeberg M."/>
            <person name="Jackson R.W."/>
            <person name="Selengut J."/>
            <person name="Dodson R."/>
            <person name="Brinkac L.M."/>
            <person name="Daugherty S.C."/>
            <person name="DeBoy R.T."/>
            <person name="Durkin A.S."/>
            <person name="Gwinn Giglio M."/>
            <person name="Madupu R."/>
            <person name="Nelson W.C."/>
            <person name="Rosovitz M.J."/>
            <person name="Sullivan S.A."/>
            <person name="Crabtree J."/>
            <person name="Creasy T."/>
            <person name="Davidsen T.M."/>
            <person name="Haft D.H."/>
            <person name="Zafar N."/>
            <person name="Zhou L."/>
            <person name="Halpin R."/>
            <person name="Holley T."/>
            <person name="Khouri H.M."/>
            <person name="Feldblyum T.V."/>
            <person name="White O."/>
            <person name="Fraser C.M."/>
            <person name="Chatterjee A.K."/>
            <person name="Cartinhour S."/>
            <person name="Schneider D."/>
            <person name="Mansfield J.W."/>
            <person name="Collmer A."/>
            <person name="Buell R."/>
        </authorList>
    </citation>
    <scope>NUCLEOTIDE SEQUENCE [LARGE SCALE GENOMIC DNA]</scope>
    <source>
        <strain>1448A / Race 6</strain>
    </source>
</reference>
<dbReference type="EMBL" id="CP000058">
    <property type="protein sequence ID" value="AAZ35026.1"/>
    <property type="molecule type" value="Genomic_DNA"/>
</dbReference>
<dbReference type="RefSeq" id="WP_002554001.1">
    <property type="nucleotide sequence ID" value="NC_005773.3"/>
</dbReference>
<dbReference type="SMR" id="Q48H65"/>
<dbReference type="GeneID" id="69860125"/>
<dbReference type="KEGG" id="psp:PSPPH_3098"/>
<dbReference type="eggNOG" id="COG2127">
    <property type="taxonomic scope" value="Bacteria"/>
</dbReference>
<dbReference type="HOGENOM" id="CLU_134358_2_0_6"/>
<dbReference type="Proteomes" id="UP000000551">
    <property type="component" value="Chromosome"/>
</dbReference>
<dbReference type="GO" id="GO:0030163">
    <property type="term" value="P:protein catabolic process"/>
    <property type="evidence" value="ECO:0007669"/>
    <property type="project" value="InterPro"/>
</dbReference>
<dbReference type="GO" id="GO:0006508">
    <property type="term" value="P:proteolysis"/>
    <property type="evidence" value="ECO:0007669"/>
    <property type="project" value="UniProtKB-UniRule"/>
</dbReference>
<dbReference type="FunFam" id="3.30.1390.10:FF:000002">
    <property type="entry name" value="ATP-dependent Clp protease adapter protein ClpS"/>
    <property type="match status" value="1"/>
</dbReference>
<dbReference type="Gene3D" id="3.30.1390.10">
    <property type="match status" value="1"/>
</dbReference>
<dbReference type="HAMAP" id="MF_00302">
    <property type="entry name" value="ClpS"/>
    <property type="match status" value="1"/>
</dbReference>
<dbReference type="InterPro" id="IPR022935">
    <property type="entry name" value="ClpS"/>
</dbReference>
<dbReference type="InterPro" id="IPR003769">
    <property type="entry name" value="ClpS_core"/>
</dbReference>
<dbReference type="InterPro" id="IPR014719">
    <property type="entry name" value="Ribosomal_bL12_C/ClpS-like"/>
</dbReference>
<dbReference type="NCBIfam" id="NF000669">
    <property type="entry name" value="PRK00033.1-2"/>
    <property type="match status" value="1"/>
</dbReference>
<dbReference type="NCBIfam" id="NF000672">
    <property type="entry name" value="PRK00033.1-5"/>
    <property type="match status" value="1"/>
</dbReference>
<dbReference type="PANTHER" id="PTHR33473:SF19">
    <property type="entry name" value="ATP-DEPENDENT CLP PROTEASE ADAPTER PROTEIN CLPS"/>
    <property type="match status" value="1"/>
</dbReference>
<dbReference type="PANTHER" id="PTHR33473">
    <property type="entry name" value="ATP-DEPENDENT CLP PROTEASE ADAPTER PROTEIN CLPS1, CHLOROPLASTIC"/>
    <property type="match status" value="1"/>
</dbReference>
<dbReference type="Pfam" id="PF02617">
    <property type="entry name" value="ClpS"/>
    <property type="match status" value="1"/>
</dbReference>
<dbReference type="SUPFAM" id="SSF54736">
    <property type="entry name" value="ClpS-like"/>
    <property type="match status" value="1"/>
</dbReference>
<gene>
    <name evidence="1" type="primary">clpS</name>
    <name type="ordered locus">PSPPH_3098</name>
</gene>
<evidence type="ECO:0000255" key="1">
    <source>
        <dbReference type="HAMAP-Rule" id="MF_00302"/>
    </source>
</evidence>
<feature type="chain" id="PRO_0000300719" description="ATP-dependent Clp protease adapter protein ClpS">
    <location>
        <begin position="1"/>
        <end position="120"/>
    </location>
</feature>
<organism>
    <name type="scientific">Pseudomonas savastanoi pv. phaseolicola (strain 1448A / Race 6)</name>
    <name type="common">Pseudomonas syringae pv. phaseolicola (strain 1448A / Race 6)</name>
    <dbReference type="NCBI Taxonomy" id="264730"/>
    <lineage>
        <taxon>Bacteria</taxon>
        <taxon>Pseudomonadati</taxon>
        <taxon>Pseudomonadota</taxon>
        <taxon>Gammaproteobacteria</taxon>
        <taxon>Pseudomonadales</taxon>
        <taxon>Pseudomonadaceae</taxon>
        <taxon>Pseudomonas</taxon>
    </lineage>
</organism>
<comment type="function">
    <text evidence="1">Involved in the modulation of the specificity of the ClpAP-mediated ATP-dependent protein degradation.</text>
</comment>
<comment type="subunit">
    <text evidence="1">Binds to the N-terminal domain of the chaperone ClpA.</text>
</comment>
<comment type="similarity">
    <text evidence="1">Belongs to the ClpS family.</text>
</comment>
<proteinExistence type="inferred from homology"/>
<protein>
    <recommendedName>
        <fullName evidence="1">ATP-dependent Clp protease adapter protein ClpS</fullName>
    </recommendedName>
</protein>